<keyword id="KW-0002">3D-structure</keyword>
<keyword id="KW-0067">ATP-binding</keyword>
<keyword id="KW-0547">Nucleotide-binding</keyword>
<keyword id="KW-1185">Reference proteome</keyword>
<keyword id="KW-0843">Virulence</keyword>
<organism>
    <name type="scientific">Mycobacterium tuberculosis (strain ATCC 25618 / H37Rv)</name>
    <dbReference type="NCBI Taxonomy" id="83332"/>
    <lineage>
        <taxon>Bacteria</taxon>
        <taxon>Bacillati</taxon>
        <taxon>Actinomycetota</taxon>
        <taxon>Actinomycetes</taxon>
        <taxon>Mycobacteriales</taxon>
        <taxon>Mycobacteriaceae</taxon>
        <taxon>Mycobacterium</taxon>
        <taxon>Mycobacterium tuberculosis complex</taxon>
    </lineage>
</organism>
<evidence type="ECO:0000269" key="1">
    <source>
    </source>
</evidence>
<evidence type="ECO:0000269" key="2">
    <source>
    </source>
</evidence>
<evidence type="ECO:0000269" key="3">
    <source>
    </source>
</evidence>
<evidence type="ECO:0000269" key="4">
    <source>
    </source>
</evidence>
<evidence type="ECO:0000269" key="5">
    <source>
    </source>
</evidence>
<evidence type="ECO:0000269" key="6">
    <source>
    </source>
</evidence>
<evidence type="ECO:0000269" key="7">
    <source>
    </source>
</evidence>
<evidence type="ECO:0000269" key="8">
    <source ref="11"/>
</evidence>
<evidence type="ECO:0000269" key="9">
    <source ref="12"/>
</evidence>
<evidence type="ECO:0000305" key="10"/>
<evidence type="ECO:0007744" key="11">
    <source>
        <dbReference type="PDB" id="2JAX"/>
    </source>
</evidence>
<evidence type="ECO:0007744" key="12">
    <source>
        <dbReference type="PDB" id="3CIS"/>
    </source>
</evidence>
<evidence type="ECO:0007829" key="13">
    <source>
        <dbReference type="PDB" id="2JAX"/>
    </source>
</evidence>
<evidence type="ECO:0007829" key="14">
    <source>
        <dbReference type="PDB" id="3CIS"/>
    </source>
</evidence>
<protein>
    <recommendedName>
        <fullName>Universal stress protein Rv2623</fullName>
        <shortName>USP Rv2623</shortName>
    </recommendedName>
</protein>
<name>Y2623_MYCTU</name>
<dbReference type="EMBL" id="AL123456">
    <property type="protein sequence ID" value="CCP45421.1"/>
    <property type="molecule type" value="Genomic_DNA"/>
</dbReference>
<dbReference type="PIR" id="F70572">
    <property type="entry name" value="F70572"/>
</dbReference>
<dbReference type="RefSeq" id="NP_217139.1">
    <property type="nucleotide sequence ID" value="NC_000962.3"/>
</dbReference>
<dbReference type="RefSeq" id="WP_003413592.1">
    <property type="nucleotide sequence ID" value="NZ_NVQJ01000075.1"/>
</dbReference>
<dbReference type="PDB" id="2JAX">
    <property type="method" value="X-ray"/>
    <property type="resolution" value="3.22 A"/>
    <property type="chains" value="A=1-297"/>
</dbReference>
<dbReference type="PDB" id="3CIS">
    <property type="method" value="X-ray"/>
    <property type="resolution" value="2.90 A"/>
    <property type="chains" value="A/B/C/D/E/F/G/H=1-297"/>
</dbReference>
<dbReference type="PDBsum" id="2JAX"/>
<dbReference type="PDBsum" id="3CIS"/>
<dbReference type="SMR" id="P9WFD7"/>
<dbReference type="FunCoup" id="P9WFD7">
    <property type="interactions" value="3"/>
</dbReference>
<dbReference type="STRING" id="83332.Rv2623"/>
<dbReference type="PaxDb" id="83332-Rv2623"/>
<dbReference type="DNASU" id="887442"/>
<dbReference type="GeneID" id="887442"/>
<dbReference type="KEGG" id="mtu:Rv2623"/>
<dbReference type="KEGG" id="mtv:RVBD_2623"/>
<dbReference type="TubercuList" id="Rv2623"/>
<dbReference type="eggNOG" id="COG0589">
    <property type="taxonomic scope" value="Bacteria"/>
</dbReference>
<dbReference type="InParanoid" id="P9WFD7"/>
<dbReference type="OrthoDB" id="3174546at2"/>
<dbReference type="PhylomeDB" id="P9WFD7"/>
<dbReference type="EvolutionaryTrace" id="P9WFD7"/>
<dbReference type="Proteomes" id="UP000001584">
    <property type="component" value="Chromosome"/>
</dbReference>
<dbReference type="GO" id="GO:0005829">
    <property type="term" value="C:cytosol"/>
    <property type="evidence" value="ECO:0007005"/>
    <property type="project" value="MTBBASE"/>
</dbReference>
<dbReference type="GO" id="GO:0009274">
    <property type="term" value="C:peptidoglycan-based cell wall"/>
    <property type="evidence" value="ECO:0007005"/>
    <property type="project" value="MTBBASE"/>
</dbReference>
<dbReference type="GO" id="GO:0005886">
    <property type="term" value="C:plasma membrane"/>
    <property type="evidence" value="ECO:0007005"/>
    <property type="project" value="MTBBASE"/>
</dbReference>
<dbReference type="GO" id="GO:0005524">
    <property type="term" value="F:ATP binding"/>
    <property type="evidence" value="ECO:0000314"/>
    <property type="project" value="MTBBASE"/>
</dbReference>
<dbReference type="GO" id="GO:0085014">
    <property type="term" value="P:dormancy entry of symbiont in host"/>
    <property type="evidence" value="ECO:0000314"/>
    <property type="project" value="MTBBASE"/>
</dbReference>
<dbReference type="GO" id="GO:0040008">
    <property type="term" value="P:regulation of growth"/>
    <property type="evidence" value="ECO:0000314"/>
    <property type="project" value="MTBBASE"/>
</dbReference>
<dbReference type="GO" id="GO:0001666">
    <property type="term" value="P:response to hypoxia"/>
    <property type="evidence" value="ECO:0000314"/>
    <property type="project" value="MTBBASE"/>
</dbReference>
<dbReference type="CDD" id="cd23944">
    <property type="entry name" value="USP_Rv2623_repeat1"/>
    <property type="match status" value="1"/>
</dbReference>
<dbReference type="CDD" id="cd23661">
    <property type="entry name" value="USP_Rv2623_repeat2"/>
    <property type="match status" value="1"/>
</dbReference>
<dbReference type="FunFam" id="3.40.50.620:FF:000123">
    <property type="entry name" value="Universal stress protein family"/>
    <property type="match status" value="1"/>
</dbReference>
<dbReference type="Gene3D" id="3.40.50.620">
    <property type="entry name" value="HUPs"/>
    <property type="match status" value="2"/>
</dbReference>
<dbReference type="InterPro" id="IPR014729">
    <property type="entry name" value="Rossmann-like_a/b/a_fold"/>
</dbReference>
<dbReference type="InterPro" id="IPR006015">
    <property type="entry name" value="Universal_stress_UspA"/>
</dbReference>
<dbReference type="InterPro" id="IPR006016">
    <property type="entry name" value="UspA"/>
</dbReference>
<dbReference type="PANTHER" id="PTHR46268">
    <property type="entry name" value="STRESS RESPONSE PROTEIN NHAX"/>
    <property type="match status" value="1"/>
</dbReference>
<dbReference type="PANTHER" id="PTHR46268:SF27">
    <property type="entry name" value="UNIVERSAL STRESS PROTEIN RV2623"/>
    <property type="match status" value="1"/>
</dbReference>
<dbReference type="Pfam" id="PF00582">
    <property type="entry name" value="Usp"/>
    <property type="match status" value="2"/>
</dbReference>
<dbReference type="PRINTS" id="PR01438">
    <property type="entry name" value="UNVRSLSTRESS"/>
</dbReference>
<dbReference type="SUPFAM" id="SSF52402">
    <property type="entry name" value="Adenine nucleotide alpha hydrolases-like"/>
    <property type="match status" value="2"/>
</dbReference>
<gene>
    <name type="ordered locus">Rv2623</name>
    <name type="ORF">TB31.7</name>
</gene>
<sequence length="297" mass="31652">MSSGNSSLGIIVGIDDSPAAQVAVRWAARDAELRKIPLTLVHAVSPEVATWLEVPLPPGVLRWQQDHGRHLIDDALKVVEQASLRAGPPTVHSEIVPAAAVPTLVDMSKDAVLMVVGCLGSGRWPGRLLGSVSSGLLRHAHCPVVIIHDEDSVMPHPQQAPVLVGVDGSSASELATAIAFDEASRRNVDLVALHAWSDVDVSEWPGIDWPATQSMAEQVLAERLAGWQERYPNVAITRVVVRDQPARQLVQRSEEAQLVVVGSRGRGGYAGMLVGSVGETVAQLARTPVIVARESLT</sequence>
<comment type="function">
    <text>May play a role in the establishment of a persistent infection (latency) in the host, as strains without this gene are hypervirulent. Overexpression of the protein retards growth in culture; Glu-15 and Ala-117 mutant proteins which bind less ATP do not show this retardation, suggesting growth may be regulated through an ATP-dependent function.</text>
</comment>
<comment type="subunit">
    <text evidence="7">Homodimer.</text>
</comment>
<comment type="induction">
    <text evidence="1 2 3 4 5 6">A member of the dormancy regulon. Induced in response to reduced oxygen tension (hypoxia), low levels of nitric oxide (NO) and carbon monoxide (CO). It is hoped that this regulon will give insight into the latent, or dormant phase of infection. Induced in mouse lungs at the same time that adaptive host immunity induces bacterial growth arrest; induction is dependent on interferon gamma.</text>
</comment>
<comment type="disruption phenotype">
    <text evidence="7">The deletion strain is hypervirulent compared to the wild-type strain in infection studies with outbred Hartley guinea pigs and with C3H/HeJ mice but not with C57BL/6 mice. No phenotype when grown in culture upon disruption, probably due to functional redundancy among paralogs.</text>
</comment>
<comment type="miscellaneous">
    <text>Was identified as a high-confidence drug target.</text>
</comment>
<comment type="similarity">
    <text evidence="10">Belongs to the universal stress protein A family.</text>
</comment>
<feature type="chain" id="PRO_0000392628" description="Universal stress protein Rv2623">
    <location>
        <begin position="1"/>
        <end position="297"/>
    </location>
</feature>
<feature type="binding site" evidence="8 9 11 12">
    <location>
        <position position="13"/>
    </location>
    <ligand>
        <name>ATP</name>
        <dbReference type="ChEBI" id="CHEBI:30616"/>
        <label>1</label>
    </ligand>
</feature>
<feature type="binding site" evidence="8 9 11 12">
    <location>
        <position position="43"/>
    </location>
    <ligand>
        <name>ATP</name>
        <dbReference type="ChEBI" id="CHEBI:30616"/>
        <label>1</label>
    </ligand>
</feature>
<feature type="binding site" evidence="8 9 11 12">
    <location>
        <begin position="117"/>
        <end position="123"/>
    </location>
    <ligand>
        <name>ATP</name>
        <dbReference type="ChEBI" id="CHEBI:30616"/>
        <label>1</label>
    </ligand>
</feature>
<feature type="binding site" evidence="8 9 11 12">
    <location>
        <position position="127"/>
    </location>
    <ligand>
        <name>ATP</name>
        <dbReference type="ChEBI" id="CHEBI:30616"/>
        <label>1</label>
    </ligand>
</feature>
<feature type="binding site" evidence="8 9 11 12">
    <location>
        <begin position="131"/>
        <end position="132"/>
    </location>
    <ligand>
        <name>ATP</name>
        <dbReference type="ChEBI" id="CHEBI:30616"/>
        <label>1</label>
    </ligand>
</feature>
<feature type="binding site" evidence="8 9 11 12">
    <location>
        <position position="165"/>
    </location>
    <ligand>
        <name>ATP</name>
        <dbReference type="ChEBI" id="CHEBI:30616"/>
        <label>2</label>
    </ligand>
</feature>
<feature type="binding site" evidence="8 9 11 12">
    <location>
        <position position="198"/>
    </location>
    <ligand>
        <name>ATP</name>
        <dbReference type="ChEBI" id="CHEBI:30616"/>
        <label>2</label>
    </ligand>
</feature>
<feature type="binding site" evidence="8 9 11 12">
    <location>
        <begin position="262"/>
        <end position="268"/>
    </location>
    <ligand>
        <name>ATP</name>
        <dbReference type="ChEBI" id="CHEBI:30616"/>
        <label>2</label>
    </ligand>
</feature>
<feature type="binding site" evidence="8 9 11 12">
    <location>
        <begin position="276"/>
        <end position="278"/>
    </location>
    <ligand>
        <name>ATP</name>
        <dbReference type="ChEBI" id="CHEBI:30616"/>
        <label>2</label>
    </ligand>
</feature>
<feature type="mutagenesis site" description="Reduces ATP-binding; M.tuberculosis overexpressing this protein grows normally." evidence="7">
    <original>D</original>
    <variation>E</variation>
    <location>
        <position position="15"/>
    </location>
</feature>
<feature type="mutagenesis site" description="Reduces ATP-binding; M.tuberculosis overexpressing this protein grows normally." evidence="7">
    <original>G</original>
    <variation>A</variation>
    <location>
        <position position="117"/>
    </location>
</feature>
<feature type="strand" evidence="14">
    <location>
        <begin position="9"/>
        <end position="13"/>
    </location>
</feature>
<feature type="helix" evidence="14">
    <location>
        <begin position="18"/>
        <end position="34"/>
    </location>
</feature>
<feature type="strand" evidence="14">
    <location>
        <begin position="38"/>
        <end position="43"/>
    </location>
</feature>
<feature type="helix" evidence="14">
    <location>
        <begin position="58"/>
        <end position="82"/>
    </location>
</feature>
<feature type="strand" evidence="14">
    <location>
        <begin position="84"/>
        <end position="86"/>
    </location>
</feature>
<feature type="strand" evidence="14">
    <location>
        <begin position="91"/>
        <end position="98"/>
    </location>
</feature>
<feature type="helix" evidence="14">
    <location>
        <begin position="100"/>
        <end position="107"/>
    </location>
</feature>
<feature type="helix" evidence="14">
    <location>
        <begin position="108"/>
        <end position="110"/>
    </location>
</feature>
<feature type="strand" evidence="14">
    <location>
        <begin position="111"/>
        <end position="119"/>
    </location>
</feature>
<feature type="helix" evidence="14">
    <location>
        <begin position="131"/>
        <end position="139"/>
    </location>
</feature>
<feature type="strand" evidence="14">
    <location>
        <begin position="144"/>
        <end position="147"/>
    </location>
</feature>
<feature type="strand" evidence="14">
    <location>
        <begin position="162"/>
        <end position="165"/>
    </location>
</feature>
<feature type="helix" evidence="14">
    <location>
        <begin position="170"/>
        <end position="185"/>
    </location>
</feature>
<feature type="strand" evidence="14">
    <location>
        <begin position="190"/>
        <end position="196"/>
    </location>
</feature>
<feature type="strand" evidence="13">
    <location>
        <begin position="198"/>
        <end position="200"/>
    </location>
</feature>
<feature type="helix" evidence="14">
    <location>
        <begin position="209"/>
        <end position="224"/>
    </location>
</feature>
<feature type="helix" evidence="14">
    <location>
        <begin position="227"/>
        <end position="230"/>
    </location>
</feature>
<feature type="strand" evidence="14">
    <location>
        <begin position="236"/>
        <end position="243"/>
    </location>
</feature>
<feature type="helix" evidence="14">
    <location>
        <begin position="245"/>
        <end position="253"/>
    </location>
</feature>
<feature type="strand" evidence="14">
    <location>
        <begin position="257"/>
        <end position="264"/>
    </location>
</feature>
<feature type="helix" evidence="14">
    <location>
        <begin position="276"/>
        <end position="284"/>
    </location>
</feature>
<feature type="strand" evidence="14">
    <location>
        <begin position="289"/>
        <end position="292"/>
    </location>
</feature>
<reference key="1">
    <citation type="journal article" date="1998" name="Nature">
        <title>Deciphering the biology of Mycobacterium tuberculosis from the complete genome sequence.</title>
        <authorList>
            <person name="Cole S.T."/>
            <person name="Brosch R."/>
            <person name="Parkhill J."/>
            <person name="Garnier T."/>
            <person name="Churcher C.M."/>
            <person name="Harris D.E."/>
            <person name="Gordon S.V."/>
            <person name="Eiglmeier K."/>
            <person name="Gas S."/>
            <person name="Barry C.E. III"/>
            <person name="Tekaia F."/>
            <person name="Badcock K."/>
            <person name="Basham D."/>
            <person name="Brown D."/>
            <person name="Chillingworth T."/>
            <person name="Connor R."/>
            <person name="Davies R.M."/>
            <person name="Devlin K."/>
            <person name="Feltwell T."/>
            <person name="Gentles S."/>
            <person name="Hamlin N."/>
            <person name="Holroyd S."/>
            <person name="Hornsby T."/>
            <person name="Jagels K."/>
            <person name="Krogh A."/>
            <person name="McLean J."/>
            <person name="Moule S."/>
            <person name="Murphy L.D."/>
            <person name="Oliver S."/>
            <person name="Osborne J."/>
            <person name="Quail M.A."/>
            <person name="Rajandream M.A."/>
            <person name="Rogers J."/>
            <person name="Rutter S."/>
            <person name="Seeger K."/>
            <person name="Skelton S."/>
            <person name="Squares S."/>
            <person name="Squares R."/>
            <person name="Sulston J.E."/>
            <person name="Taylor K."/>
            <person name="Whitehead S."/>
            <person name="Barrell B.G."/>
        </authorList>
    </citation>
    <scope>NUCLEOTIDE SEQUENCE [LARGE SCALE GENOMIC DNA]</scope>
    <source>
        <strain>ATCC 25618 / H37Rv</strain>
    </source>
</reference>
<reference key="2">
    <citation type="journal article" date="2001" name="Proc. Natl. Acad. Sci. U.S.A.">
        <title>Regulation of the Mycobacterium tuberculosis hypoxic response gene encoding alpha -crystallin.</title>
        <authorList>
            <person name="Sherman D.R."/>
            <person name="Voskuil M."/>
            <person name="Schnappinger D."/>
            <person name="Liao R."/>
            <person name="Harrell M.I."/>
            <person name="Schoolnik G.K."/>
        </authorList>
    </citation>
    <scope>INDUCTION BY HYPOXIA</scope>
    <source>
        <strain>ATCC 25618 / H37Rv</strain>
    </source>
</reference>
<reference key="3">
    <citation type="journal article" date="2002" name="J. Bacteriol.">
        <title>Hypoxic response of Mycobacterium tuberculosis studied by metabolic labeling and proteome analysis of cellular and extracellular proteins.</title>
        <authorList>
            <person name="Rosenkrands I."/>
            <person name="Slayden R.A."/>
            <person name="Crawford J."/>
            <person name="Aagaard C."/>
            <person name="Barry C.E. III"/>
            <person name="Andersen P."/>
        </authorList>
    </citation>
    <scope>IDENTIFICATION BY MASS SPECTROMETRY</scope>
    <scope>INDUCTION BY HYPOXIA</scope>
    <source>
        <strain>ATCC 25618 / H37Rv</strain>
    </source>
</reference>
<reference key="4">
    <citation type="journal article" date="2003" name="J. Exp. Med.">
        <title>Inhibition of respiration by nitric oxide induces a Mycobacterium tuberculosis dormancy program.</title>
        <authorList>
            <person name="Voskuil M.I."/>
            <person name="Schnappinger D."/>
            <person name="Visconti K.C."/>
            <person name="Harrell M.I."/>
            <person name="Dolganov G.M."/>
            <person name="Sherman D.R."/>
            <person name="Schoolnik G.K."/>
        </authorList>
    </citation>
    <scope>INDUCTION BY NITRIC OXIDE (NO) AND BY HYPOXIA</scope>
    <scope>DORMANCY REGULON</scope>
    <source>
        <strain>ATCC 25618 / H37Rv</strain>
    </source>
</reference>
<reference key="5">
    <citation type="journal article" date="2003" name="Proc. Natl. Acad. Sci. U.S.A.">
        <title>Expression of Th1-mediated immunity in mouse lungs induces a Mycobacterium tuberculosis transcription pattern characteristic of nonreplicating persistence.</title>
        <authorList>
            <person name="Shi L."/>
            <person name="Jung Y.J."/>
            <person name="Tyagi S."/>
            <person name="Gennaro M.L."/>
            <person name="North R.J."/>
        </authorList>
    </citation>
    <scope>INDUCTION BY HOST IMMUNITY</scope>
    <source>
        <strain>ATCC 25618 / H37Rv</strain>
    </source>
</reference>
<reference key="6">
    <citation type="journal article" date="2008" name="BMC Syst. Biol.">
        <title>targetTB: a target identification pipeline for Mycobacterium tuberculosis through an interactome, reactome and genome-scale structural analysis.</title>
        <authorList>
            <person name="Raman K."/>
            <person name="Yeturu K."/>
            <person name="Chandra N."/>
        </authorList>
    </citation>
    <scope>IDENTIFICATION AS A DRUG TARGET [LARGE SCALE ANALYSIS]</scope>
</reference>
<reference key="7">
    <citation type="journal article" date="2008" name="Cell Host Microbe">
        <title>Mycobacterium tuberculosis senses host-derived carbon monoxide during macrophage infection.</title>
        <authorList>
            <person name="Shiloh M.U."/>
            <person name="Manzanillo P."/>
            <person name="Cox J.S."/>
        </authorList>
    </citation>
    <scope>INDUCTION BY CARBON MONOXIDE (CO)</scope>
    <source>
        <strain>ATCC 35801 / TMC 107 / Erdman</strain>
    </source>
</reference>
<reference key="8">
    <citation type="journal article" date="2008" name="J. Biol. Chem.">
        <title>Heme oxygenase-1-derived carbon monoxide induces the Mycobacterium tuberculosis dormancy regulon.</title>
        <authorList>
            <person name="Kumar A."/>
            <person name="Deshane J.S."/>
            <person name="Crossman D.K."/>
            <person name="Bolisetty S."/>
            <person name="Yan B.S."/>
            <person name="Kramnik I."/>
            <person name="Agarwal A."/>
            <person name="Steyn A.J."/>
        </authorList>
    </citation>
    <scope>INDUCTION BY CARBON MONOXIDE (CO)</scope>
    <scope>DORMANCY REGULON</scope>
    <source>
        <strain>ATCC 25618 / H37Rv</strain>
    </source>
</reference>
<reference key="9">
    <citation type="journal article" date="2011" name="Mol. Cell. Proteomics">
        <title>Proteogenomic analysis of Mycobacterium tuberculosis by high resolution mass spectrometry.</title>
        <authorList>
            <person name="Kelkar D.S."/>
            <person name="Kumar D."/>
            <person name="Kumar P."/>
            <person name="Balakrishnan L."/>
            <person name="Muthusamy B."/>
            <person name="Yadav A.K."/>
            <person name="Shrivastava P."/>
            <person name="Marimuthu A."/>
            <person name="Anand S."/>
            <person name="Sundaram H."/>
            <person name="Kingsbury R."/>
            <person name="Harsha H.C."/>
            <person name="Nair B."/>
            <person name="Prasad T.S."/>
            <person name="Chauhan D.S."/>
            <person name="Katoch K."/>
            <person name="Katoch V.M."/>
            <person name="Kumar P."/>
            <person name="Chaerkady R."/>
            <person name="Ramachandran S."/>
            <person name="Dash D."/>
            <person name="Pandey A."/>
        </authorList>
    </citation>
    <scope>IDENTIFICATION BY MASS SPECTROMETRY [LARGE SCALE ANALYSIS]</scope>
    <source>
        <strain>ATCC 25618 / H37Rv</strain>
    </source>
</reference>
<reference key="10">
    <citation type="journal article" date="2009" name="PLoS Pathog.">
        <title>Mycobacterium tuberculosis universal stress protein Rv2623 regulates bacillary growth by ATP-binding: requirement for establishing chronic persistent infection.</title>
        <authorList>
            <person name="Drumm J.E."/>
            <person name="Mi K."/>
            <person name="Bilder P."/>
            <person name="Sun M."/>
            <person name="Lim J."/>
            <person name="Bielefeldt-Ohmann H."/>
            <person name="Basaraba R."/>
            <person name="So M."/>
            <person name="Zhu G."/>
            <person name="Tufariello J.M."/>
            <person name="Izzo A.A."/>
            <person name="Orme I.M."/>
            <person name="Almo S.C."/>
            <person name="Leyh T.S."/>
            <person name="Chan J."/>
        </authorList>
    </citation>
    <scope>X-RAY CRYSTALLOGRAPHY (2.9 ANGSTROMS)</scope>
    <scope>SUBUNIT</scope>
    <scope>ADP- AND ATP-BINDING</scope>
    <scope>MUTAGENESIS OF ASP-15 AND GLY-117</scope>
    <scope>DISRUPTION PHENOTYPE</scope>
    <source>
        <strain>ATCC 35801 / TMC 107 / Erdman</strain>
    </source>
</reference>
<reference key="11">
    <citation type="submission" date="2009-02" db="PDB data bank">
        <title>Crystal structure of universal stress protein Rv2623 from mycobacterium tuberculosis.</title>
        <authorList>
            <consortium name="Mycobacterium tuberculosis structural genomics consortium (TB)"/>
        </authorList>
    </citation>
    <scope>X-RAY CRYSTALLOGRAPHY (3.22 ANGSTROMS) IN COMPLEX WITH ATP</scope>
</reference>
<reference evidence="12" key="12">
    <citation type="submission" date="2008-03" db="PDB data bank">
        <title>The crystal structure of Rv2623: a novel, tandem-repeat universal stress protein of Mycobacterium tuberculosis.</title>
        <authorList>
            <person name="Drumm J."/>
            <person name="Mi K."/>
            <person name="Bilder P."/>
            <person name="Almo S."/>
            <person name="Chan J."/>
        </authorList>
    </citation>
    <scope>X-RAY CRYSTALLOGRAPHY (2.90 ANGSTROMS) IN COMPLEX WITH ATP</scope>
</reference>
<proteinExistence type="evidence at protein level"/>
<accession>P9WFD7</accession>
<accession>L0TAF1</accession>
<accession>O06189</accession>
<accession>Q7D6V7</accession>